<protein>
    <recommendedName>
        <fullName evidence="1">Ribosomal RNA small subunit methyltransferase A</fullName>
        <ecNumber evidence="1">2.1.1.182</ecNumber>
    </recommendedName>
    <alternativeName>
        <fullName evidence="1">16S rRNA (adenine(1518)-N(6)/adenine(1519)-N(6))-dimethyltransferase</fullName>
    </alternativeName>
    <alternativeName>
        <fullName evidence="1">16S rRNA dimethyladenosine transferase</fullName>
    </alternativeName>
    <alternativeName>
        <fullName evidence="1">16S rRNA dimethylase</fullName>
    </alternativeName>
    <alternativeName>
        <fullName evidence="1">S-adenosylmethionine-6-N', N'-adenosyl(rRNA) dimethyltransferase</fullName>
    </alternativeName>
</protein>
<proteinExistence type="inferred from homology"/>
<evidence type="ECO:0000255" key="1">
    <source>
        <dbReference type="HAMAP-Rule" id="MF_00607"/>
    </source>
</evidence>
<keyword id="KW-0963">Cytoplasm</keyword>
<keyword id="KW-0489">Methyltransferase</keyword>
<keyword id="KW-1185">Reference proteome</keyword>
<keyword id="KW-0694">RNA-binding</keyword>
<keyword id="KW-0698">rRNA processing</keyword>
<keyword id="KW-0949">S-adenosyl-L-methionine</keyword>
<keyword id="KW-0808">Transferase</keyword>
<sequence length="271" mass="30246">MVRPRKLFAQHWLKSEKALDAIVKAAECSTNDRILEIGPGTGILTRRLLPAVQSLVAVEIDRDLCELLAKQLGKKENFLLLQGDFLTIDLAANLGSFPKFQKPNKVVANIPYNITGPIIEKLLGTISNPNLEPFDSIVLLIQKEVAERLYAKSGSRTFGALSVRVQYLADCEFICDVPASAFHPPPKVDSAVVRLRPRQIEIPVNDPKRLENLVKLGFGAKRKMLRNNLQSVVDRDRLSQLLEQLNINPQARAEDISTQQWVKLANLLGVE</sequence>
<gene>
    <name evidence="1" type="primary">rsmA</name>
    <name evidence="1" type="synonym">ksgA</name>
    <name type="ordered locus">alr3229</name>
</gene>
<reference key="1">
    <citation type="journal article" date="2001" name="DNA Res.">
        <title>Complete genomic sequence of the filamentous nitrogen-fixing cyanobacterium Anabaena sp. strain PCC 7120.</title>
        <authorList>
            <person name="Kaneko T."/>
            <person name="Nakamura Y."/>
            <person name="Wolk C.P."/>
            <person name="Kuritz T."/>
            <person name="Sasamoto S."/>
            <person name="Watanabe A."/>
            <person name="Iriguchi M."/>
            <person name="Ishikawa A."/>
            <person name="Kawashima K."/>
            <person name="Kimura T."/>
            <person name="Kishida Y."/>
            <person name="Kohara M."/>
            <person name="Matsumoto M."/>
            <person name="Matsuno A."/>
            <person name="Muraki A."/>
            <person name="Nakazaki N."/>
            <person name="Shimpo S."/>
            <person name="Sugimoto M."/>
            <person name="Takazawa M."/>
            <person name="Yamada M."/>
            <person name="Yasuda M."/>
            <person name="Tabata S."/>
        </authorList>
    </citation>
    <scope>NUCLEOTIDE SEQUENCE [LARGE SCALE GENOMIC DNA]</scope>
    <source>
        <strain>PCC 7120 / SAG 25.82 / UTEX 2576</strain>
    </source>
</reference>
<organism>
    <name type="scientific">Nostoc sp. (strain PCC 7120 / SAG 25.82 / UTEX 2576)</name>
    <dbReference type="NCBI Taxonomy" id="103690"/>
    <lineage>
        <taxon>Bacteria</taxon>
        <taxon>Bacillati</taxon>
        <taxon>Cyanobacteriota</taxon>
        <taxon>Cyanophyceae</taxon>
        <taxon>Nostocales</taxon>
        <taxon>Nostocaceae</taxon>
        <taxon>Nostoc</taxon>
    </lineage>
</organism>
<name>RSMA_NOSS1</name>
<feature type="chain" id="PRO_0000101473" description="Ribosomal RNA small subunit methyltransferase A">
    <location>
        <begin position="1"/>
        <end position="271"/>
    </location>
</feature>
<feature type="binding site" evidence="1">
    <location>
        <position position="11"/>
    </location>
    <ligand>
        <name>S-adenosyl-L-methionine</name>
        <dbReference type="ChEBI" id="CHEBI:59789"/>
    </ligand>
</feature>
<feature type="binding site" evidence="1">
    <location>
        <position position="13"/>
    </location>
    <ligand>
        <name>S-adenosyl-L-methionine</name>
        <dbReference type="ChEBI" id="CHEBI:59789"/>
    </ligand>
</feature>
<feature type="binding site" evidence="1">
    <location>
        <position position="38"/>
    </location>
    <ligand>
        <name>S-adenosyl-L-methionine</name>
        <dbReference type="ChEBI" id="CHEBI:59789"/>
    </ligand>
</feature>
<feature type="binding site" evidence="1">
    <location>
        <position position="59"/>
    </location>
    <ligand>
        <name>S-adenosyl-L-methionine</name>
        <dbReference type="ChEBI" id="CHEBI:59789"/>
    </ligand>
</feature>
<feature type="binding site" evidence="1">
    <location>
        <position position="84"/>
    </location>
    <ligand>
        <name>S-adenosyl-L-methionine</name>
        <dbReference type="ChEBI" id="CHEBI:59789"/>
    </ligand>
</feature>
<feature type="binding site" evidence="1">
    <location>
        <position position="109"/>
    </location>
    <ligand>
        <name>S-adenosyl-L-methionine</name>
        <dbReference type="ChEBI" id="CHEBI:59789"/>
    </ligand>
</feature>
<dbReference type="EC" id="2.1.1.182" evidence="1"/>
<dbReference type="EMBL" id="BA000019">
    <property type="protein sequence ID" value="BAB74928.1"/>
    <property type="molecule type" value="Genomic_DNA"/>
</dbReference>
<dbReference type="PIR" id="AF2209">
    <property type="entry name" value="AF2209"/>
</dbReference>
<dbReference type="RefSeq" id="WP_010997380.1">
    <property type="nucleotide sequence ID" value="NZ_RSCN01000001.1"/>
</dbReference>
<dbReference type="SMR" id="Q8YS62"/>
<dbReference type="STRING" id="103690.gene:10495267"/>
<dbReference type="KEGG" id="ana:alr3229"/>
<dbReference type="eggNOG" id="COG0030">
    <property type="taxonomic scope" value="Bacteria"/>
</dbReference>
<dbReference type="OrthoDB" id="9814755at2"/>
<dbReference type="Proteomes" id="UP000002483">
    <property type="component" value="Chromosome"/>
</dbReference>
<dbReference type="GO" id="GO:0005829">
    <property type="term" value="C:cytosol"/>
    <property type="evidence" value="ECO:0007669"/>
    <property type="project" value="TreeGrafter"/>
</dbReference>
<dbReference type="GO" id="GO:0052908">
    <property type="term" value="F:16S rRNA (adenine(1518)-N(6)/adenine(1519)-N(6))-dimethyltransferase activity"/>
    <property type="evidence" value="ECO:0007669"/>
    <property type="project" value="UniProtKB-EC"/>
</dbReference>
<dbReference type="GO" id="GO:0003723">
    <property type="term" value="F:RNA binding"/>
    <property type="evidence" value="ECO:0007669"/>
    <property type="project" value="UniProtKB-KW"/>
</dbReference>
<dbReference type="CDD" id="cd02440">
    <property type="entry name" value="AdoMet_MTases"/>
    <property type="match status" value="1"/>
</dbReference>
<dbReference type="FunFam" id="1.10.8.100:FF:000001">
    <property type="entry name" value="Ribosomal RNA small subunit methyltransferase A"/>
    <property type="match status" value="1"/>
</dbReference>
<dbReference type="FunFam" id="3.40.50.150:FF:000023">
    <property type="entry name" value="Ribosomal RNA small subunit methyltransferase A"/>
    <property type="match status" value="1"/>
</dbReference>
<dbReference type="Gene3D" id="1.10.8.100">
    <property type="entry name" value="Ribosomal RNA adenine dimethylase-like, domain 2"/>
    <property type="match status" value="1"/>
</dbReference>
<dbReference type="Gene3D" id="3.40.50.150">
    <property type="entry name" value="Vaccinia Virus protein VP39"/>
    <property type="match status" value="1"/>
</dbReference>
<dbReference type="HAMAP" id="MF_00607">
    <property type="entry name" value="16SrRNA_methyltr_A"/>
    <property type="match status" value="1"/>
</dbReference>
<dbReference type="InterPro" id="IPR001737">
    <property type="entry name" value="KsgA/Erm"/>
</dbReference>
<dbReference type="InterPro" id="IPR023165">
    <property type="entry name" value="rRNA_Ade_diMease-like_C"/>
</dbReference>
<dbReference type="InterPro" id="IPR020596">
    <property type="entry name" value="rRNA_Ade_Mease_Trfase_CS"/>
</dbReference>
<dbReference type="InterPro" id="IPR020598">
    <property type="entry name" value="rRNA_Ade_methylase_Trfase_N"/>
</dbReference>
<dbReference type="InterPro" id="IPR011530">
    <property type="entry name" value="rRNA_adenine_dimethylase"/>
</dbReference>
<dbReference type="InterPro" id="IPR029063">
    <property type="entry name" value="SAM-dependent_MTases_sf"/>
</dbReference>
<dbReference type="NCBIfam" id="TIGR00755">
    <property type="entry name" value="ksgA"/>
    <property type="match status" value="1"/>
</dbReference>
<dbReference type="PANTHER" id="PTHR11727">
    <property type="entry name" value="DIMETHYLADENOSINE TRANSFERASE"/>
    <property type="match status" value="1"/>
</dbReference>
<dbReference type="PANTHER" id="PTHR11727:SF7">
    <property type="entry name" value="DIMETHYLADENOSINE TRANSFERASE-RELATED"/>
    <property type="match status" value="1"/>
</dbReference>
<dbReference type="Pfam" id="PF00398">
    <property type="entry name" value="RrnaAD"/>
    <property type="match status" value="1"/>
</dbReference>
<dbReference type="SMART" id="SM00650">
    <property type="entry name" value="rADc"/>
    <property type="match status" value="1"/>
</dbReference>
<dbReference type="SUPFAM" id="SSF53335">
    <property type="entry name" value="S-adenosyl-L-methionine-dependent methyltransferases"/>
    <property type="match status" value="1"/>
</dbReference>
<dbReference type="PROSITE" id="PS01131">
    <property type="entry name" value="RRNA_A_DIMETH"/>
    <property type="match status" value="1"/>
</dbReference>
<dbReference type="PROSITE" id="PS51689">
    <property type="entry name" value="SAM_RNA_A_N6_MT"/>
    <property type="match status" value="1"/>
</dbReference>
<accession>Q8YS62</accession>
<comment type="function">
    <text evidence="1">Specifically dimethylates two adjacent adenosines (A1518 and A1519) in the loop of a conserved hairpin near the 3'-end of 16S rRNA in the 30S particle. May play a critical role in biogenesis of 30S subunits.</text>
</comment>
<comment type="catalytic activity">
    <reaction evidence="1">
        <text>adenosine(1518)/adenosine(1519) in 16S rRNA + 4 S-adenosyl-L-methionine = N(6)-dimethyladenosine(1518)/N(6)-dimethyladenosine(1519) in 16S rRNA + 4 S-adenosyl-L-homocysteine + 4 H(+)</text>
        <dbReference type="Rhea" id="RHEA:19609"/>
        <dbReference type="Rhea" id="RHEA-COMP:10232"/>
        <dbReference type="Rhea" id="RHEA-COMP:10233"/>
        <dbReference type="ChEBI" id="CHEBI:15378"/>
        <dbReference type="ChEBI" id="CHEBI:57856"/>
        <dbReference type="ChEBI" id="CHEBI:59789"/>
        <dbReference type="ChEBI" id="CHEBI:74411"/>
        <dbReference type="ChEBI" id="CHEBI:74493"/>
        <dbReference type="EC" id="2.1.1.182"/>
    </reaction>
</comment>
<comment type="subcellular location">
    <subcellularLocation>
        <location evidence="1">Cytoplasm</location>
    </subcellularLocation>
</comment>
<comment type="similarity">
    <text evidence="1">Belongs to the class I-like SAM-binding methyltransferase superfamily. rRNA adenine N(6)-methyltransferase family. RsmA subfamily.</text>
</comment>